<dbReference type="EMBL" id="CP000514">
    <property type="protein sequence ID" value="ABM20634.1"/>
    <property type="molecule type" value="Genomic_DNA"/>
</dbReference>
<dbReference type="RefSeq" id="WP_011786975.1">
    <property type="nucleotide sequence ID" value="NC_008740.1"/>
</dbReference>
<dbReference type="SMR" id="A1U6L5"/>
<dbReference type="STRING" id="351348.Maqu_3565"/>
<dbReference type="GeneID" id="31822810"/>
<dbReference type="KEGG" id="maq:Maqu_3565"/>
<dbReference type="eggNOG" id="COG0227">
    <property type="taxonomic scope" value="Bacteria"/>
</dbReference>
<dbReference type="HOGENOM" id="CLU_064548_3_1_6"/>
<dbReference type="OrthoDB" id="9805609at2"/>
<dbReference type="Proteomes" id="UP000000998">
    <property type="component" value="Chromosome"/>
</dbReference>
<dbReference type="GO" id="GO:0022625">
    <property type="term" value="C:cytosolic large ribosomal subunit"/>
    <property type="evidence" value="ECO:0007669"/>
    <property type="project" value="TreeGrafter"/>
</dbReference>
<dbReference type="GO" id="GO:0003735">
    <property type="term" value="F:structural constituent of ribosome"/>
    <property type="evidence" value="ECO:0007669"/>
    <property type="project" value="InterPro"/>
</dbReference>
<dbReference type="GO" id="GO:0006412">
    <property type="term" value="P:translation"/>
    <property type="evidence" value="ECO:0007669"/>
    <property type="project" value="UniProtKB-UniRule"/>
</dbReference>
<dbReference type="FunFam" id="2.30.170.40:FF:000001">
    <property type="entry name" value="50S ribosomal protein L28"/>
    <property type="match status" value="1"/>
</dbReference>
<dbReference type="Gene3D" id="2.30.170.40">
    <property type="entry name" value="Ribosomal protein L28/L24"/>
    <property type="match status" value="1"/>
</dbReference>
<dbReference type="HAMAP" id="MF_00373">
    <property type="entry name" value="Ribosomal_bL28"/>
    <property type="match status" value="1"/>
</dbReference>
<dbReference type="InterPro" id="IPR026569">
    <property type="entry name" value="Ribosomal_bL28"/>
</dbReference>
<dbReference type="InterPro" id="IPR034704">
    <property type="entry name" value="Ribosomal_bL28/bL31-like_sf"/>
</dbReference>
<dbReference type="InterPro" id="IPR001383">
    <property type="entry name" value="Ribosomal_bL28_bact-type"/>
</dbReference>
<dbReference type="InterPro" id="IPR037147">
    <property type="entry name" value="Ribosomal_bL28_sf"/>
</dbReference>
<dbReference type="NCBIfam" id="TIGR00009">
    <property type="entry name" value="L28"/>
    <property type="match status" value="1"/>
</dbReference>
<dbReference type="PANTHER" id="PTHR13528">
    <property type="entry name" value="39S RIBOSOMAL PROTEIN L28, MITOCHONDRIAL"/>
    <property type="match status" value="1"/>
</dbReference>
<dbReference type="PANTHER" id="PTHR13528:SF2">
    <property type="entry name" value="LARGE RIBOSOMAL SUBUNIT PROTEIN BL28M"/>
    <property type="match status" value="1"/>
</dbReference>
<dbReference type="Pfam" id="PF00830">
    <property type="entry name" value="Ribosomal_L28"/>
    <property type="match status" value="1"/>
</dbReference>
<dbReference type="SUPFAM" id="SSF143800">
    <property type="entry name" value="L28p-like"/>
    <property type="match status" value="1"/>
</dbReference>
<name>RL28_MARN8</name>
<comment type="similarity">
    <text evidence="1">Belongs to the bacterial ribosomal protein bL28 family.</text>
</comment>
<organism>
    <name type="scientific">Marinobacter nauticus (strain ATCC 700491 / DSM 11845 / VT8)</name>
    <name type="common">Marinobacter aquaeolei</name>
    <dbReference type="NCBI Taxonomy" id="351348"/>
    <lineage>
        <taxon>Bacteria</taxon>
        <taxon>Pseudomonadati</taxon>
        <taxon>Pseudomonadota</taxon>
        <taxon>Gammaproteobacteria</taxon>
        <taxon>Pseudomonadales</taxon>
        <taxon>Marinobacteraceae</taxon>
        <taxon>Marinobacter</taxon>
    </lineage>
</organism>
<reference key="1">
    <citation type="journal article" date="2011" name="Appl. Environ. Microbiol.">
        <title>Genomic potential of Marinobacter aquaeolei, a biogeochemical 'opportunitroph'.</title>
        <authorList>
            <person name="Singer E."/>
            <person name="Webb E.A."/>
            <person name="Nelson W.C."/>
            <person name="Heidelberg J.F."/>
            <person name="Ivanova N."/>
            <person name="Pati A."/>
            <person name="Edwards K.J."/>
        </authorList>
    </citation>
    <scope>NUCLEOTIDE SEQUENCE [LARGE SCALE GENOMIC DNA]</scope>
    <source>
        <strain>ATCC 700491 / DSM 11845 / VT8</strain>
    </source>
</reference>
<proteinExistence type="inferred from homology"/>
<protein>
    <recommendedName>
        <fullName evidence="1">Large ribosomal subunit protein bL28</fullName>
    </recommendedName>
    <alternativeName>
        <fullName evidence="2">50S ribosomal protein L28</fullName>
    </alternativeName>
</protein>
<gene>
    <name evidence="1" type="primary">rpmB</name>
    <name type="ordered locus">Maqu_3565</name>
</gene>
<evidence type="ECO:0000255" key="1">
    <source>
        <dbReference type="HAMAP-Rule" id="MF_00373"/>
    </source>
</evidence>
<evidence type="ECO:0000305" key="2"/>
<keyword id="KW-0687">Ribonucleoprotein</keyword>
<keyword id="KW-0689">Ribosomal protein</keyword>
<accession>A1U6L5</accession>
<feature type="chain" id="PRO_1000007273" description="Large ribosomal subunit protein bL28">
    <location>
        <begin position="1"/>
        <end position="78"/>
    </location>
</feature>
<sequence>MSRVCQVTGKRPVTGNNVSHAMNHTRRRFLPNLQNHRFWVESEKRFVKLRVSTKGMRIIDKKGIDAVLADLRARGEKV</sequence>